<proteinExistence type="inferred from homology"/>
<dbReference type="EC" id="1.10.3.9" evidence="1"/>
<dbReference type="EMBL" id="EF380354">
    <property type="protein sequence ID" value="ABQ52499.1"/>
    <property type="molecule type" value="Genomic_DNA"/>
</dbReference>
<dbReference type="RefSeq" id="YP_001294250.1">
    <property type="nucleotide sequence ID" value="NC_009600.1"/>
</dbReference>
<dbReference type="SMR" id="A6MMS4"/>
<dbReference type="GeneID" id="5236706"/>
<dbReference type="GO" id="GO:0009535">
    <property type="term" value="C:chloroplast thylakoid membrane"/>
    <property type="evidence" value="ECO:0007669"/>
    <property type="project" value="UniProtKB-SubCell"/>
</dbReference>
<dbReference type="GO" id="GO:0009523">
    <property type="term" value="C:photosystem II"/>
    <property type="evidence" value="ECO:0007669"/>
    <property type="project" value="UniProtKB-KW"/>
</dbReference>
<dbReference type="GO" id="GO:0016168">
    <property type="term" value="F:chlorophyll binding"/>
    <property type="evidence" value="ECO:0007669"/>
    <property type="project" value="UniProtKB-UniRule"/>
</dbReference>
<dbReference type="GO" id="GO:0045156">
    <property type="term" value="F:electron transporter, transferring electrons within the cyclic electron transport pathway of photosynthesis activity"/>
    <property type="evidence" value="ECO:0007669"/>
    <property type="project" value="InterPro"/>
</dbReference>
<dbReference type="GO" id="GO:0005506">
    <property type="term" value="F:iron ion binding"/>
    <property type="evidence" value="ECO:0007669"/>
    <property type="project" value="UniProtKB-UniRule"/>
</dbReference>
<dbReference type="GO" id="GO:0016682">
    <property type="term" value="F:oxidoreductase activity, acting on diphenols and related substances as donors, oxygen as acceptor"/>
    <property type="evidence" value="ECO:0007669"/>
    <property type="project" value="UniProtKB-UniRule"/>
</dbReference>
<dbReference type="GO" id="GO:0010242">
    <property type="term" value="F:oxygen evolving activity"/>
    <property type="evidence" value="ECO:0007669"/>
    <property type="project" value="UniProtKB-EC"/>
</dbReference>
<dbReference type="GO" id="GO:0009772">
    <property type="term" value="P:photosynthetic electron transport in photosystem II"/>
    <property type="evidence" value="ECO:0007669"/>
    <property type="project" value="InterPro"/>
</dbReference>
<dbReference type="GO" id="GO:0009635">
    <property type="term" value="P:response to herbicide"/>
    <property type="evidence" value="ECO:0007669"/>
    <property type="project" value="UniProtKB-KW"/>
</dbReference>
<dbReference type="CDD" id="cd09289">
    <property type="entry name" value="Photosystem-II_D1"/>
    <property type="match status" value="1"/>
</dbReference>
<dbReference type="FunFam" id="1.20.85.10:FF:000002">
    <property type="entry name" value="Photosystem II protein D1"/>
    <property type="match status" value="1"/>
</dbReference>
<dbReference type="Gene3D" id="1.20.85.10">
    <property type="entry name" value="Photosystem II protein D1-like"/>
    <property type="match status" value="1"/>
</dbReference>
<dbReference type="HAMAP" id="MF_01379">
    <property type="entry name" value="PSII_PsbA_D1"/>
    <property type="match status" value="1"/>
</dbReference>
<dbReference type="InterPro" id="IPR055266">
    <property type="entry name" value="D1/D2"/>
</dbReference>
<dbReference type="InterPro" id="IPR036854">
    <property type="entry name" value="Photo_II_D1/D2_sf"/>
</dbReference>
<dbReference type="InterPro" id="IPR000484">
    <property type="entry name" value="Photo_RC_L/M"/>
</dbReference>
<dbReference type="InterPro" id="IPR055265">
    <property type="entry name" value="Photo_RC_L/M_CS"/>
</dbReference>
<dbReference type="InterPro" id="IPR005867">
    <property type="entry name" value="PSII_D1"/>
</dbReference>
<dbReference type="NCBIfam" id="TIGR01151">
    <property type="entry name" value="psbA"/>
    <property type="match status" value="1"/>
</dbReference>
<dbReference type="PANTHER" id="PTHR33149:SF12">
    <property type="entry name" value="PHOTOSYSTEM II D2 PROTEIN"/>
    <property type="match status" value="1"/>
</dbReference>
<dbReference type="PANTHER" id="PTHR33149">
    <property type="entry name" value="PHOTOSYSTEM II PROTEIN D1"/>
    <property type="match status" value="1"/>
</dbReference>
<dbReference type="Pfam" id="PF00124">
    <property type="entry name" value="Photo_RC"/>
    <property type="match status" value="1"/>
</dbReference>
<dbReference type="PRINTS" id="PR00256">
    <property type="entry name" value="REACTNCENTRE"/>
</dbReference>
<dbReference type="SUPFAM" id="SSF81483">
    <property type="entry name" value="Bacterial photosystem II reaction centre, L and M subunits"/>
    <property type="match status" value="1"/>
</dbReference>
<dbReference type="PROSITE" id="PS00244">
    <property type="entry name" value="REACTION_CENTER"/>
    <property type="match status" value="1"/>
</dbReference>
<organism>
    <name type="scientific">Illicium oligandrum</name>
    <name type="common">Star anise</name>
    <dbReference type="NCBI Taxonomy" id="145286"/>
    <lineage>
        <taxon>Eukaryota</taxon>
        <taxon>Viridiplantae</taxon>
        <taxon>Streptophyta</taxon>
        <taxon>Embryophyta</taxon>
        <taxon>Tracheophyta</taxon>
        <taxon>Spermatophyta</taxon>
        <taxon>Magnoliopsida</taxon>
        <taxon>Austrobaileyales</taxon>
        <taxon>Schisandraceae</taxon>
        <taxon>Illicium</taxon>
    </lineage>
</organism>
<geneLocation type="chloroplast"/>
<keyword id="KW-0007">Acetylation</keyword>
<keyword id="KW-0106">Calcium</keyword>
<keyword id="KW-0148">Chlorophyll</keyword>
<keyword id="KW-0150">Chloroplast</keyword>
<keyword id="KW-0157">Chromophore</keyword>
<keyword id="KW-0249">Electron transport</keyword>
<keyword id="KW-0359">Herbicide resistance</keyword>
<keyword id="KW-0408">Iron</keyword>
<keyword id="KW-0460">Magnesium</keyword>
<keyword id="KW-0464">Manganese</keyword>
<keyword id="KW-0472">Membrane</keyword>
<keyword id="KW-0479">Metal-binding</keyword>
<keyword id="KW-0560">Oxidoreductase</keyword>
<keyword id="KW-0597">Phosphoprotein</keyword>
<keyword id="KW-0602">Photosynthesis</keyword>
<keyword id="KW-0604">Photosystem II</keyword>
<keyword id="KW-0934">Plastid</keyword>
<keyword id="KW-0793">Thylakoid</keyword>
<keyword id="KW-0812">Transmembrane</keyword>
<keyword id="KW-1133">Transmembrane helix</keyword>
<keyword id="KW-0813">Transport</keyword>
<name>PSBA_ILLOL</name>
<protein>
    <recommendedName>
        <fullName evidence="1">Photosystem II protein D1</fullName>
        <shortName evidence="1">PSII D1 protein</shortName>
        <ecNumber evidence="1">1.10.3.9</ecNumber>
    </recommendedName>
    <alternativeName>
        <fullName evidence="1">Photosystem II Q(B) protein</fullName>
    </alternativeName>
</protein>
<comment type="function">
    <text evidence="1">Photosystem II (PSII) is a light-driven water:plastoquinone oxidoreductase that uses light energy to abstract electrons from H(2)O, generating O(2) and a proton gradient subsequently used for ATP formation. It consists of a core antenna complex that captures photons, and an electron transfer chain that converts photonic excitation into a charge separation. The D1/D2 (PsbA/PsbD) reaction center heterodimer binds P680, the primary electron donor of PSII as well as several subsequent electron acceptors.</text>
</comment>
<comment type="catalytic activity">
    <reaction evidence="1">
        <text>2 a plastoquinone + 4 hnu + 2 H2O = 2 a plastoquinol + O2</text>
        <dbReference type="Rhea" id="RHEA:36359"/>
        <dbReference type="Rhea" id="RHEA-COMP:9561"/>
        <dbReference type="Rhea" id="RHEA-COMP:9562"/>
        <dbReference type="ChEBI" id="CHEBI:15377"/>
        <dbReference type="ChEBI" id="CHEBI:15379"/>
        <dbReference type="ChEBI" id="CHEBI:17757"/>
        <dbReference type="ChEBI" id="CHEBI:30212"/>
        <dbReference type="ChEBI" id="CHEBI:62192"/>
        <dbReference type="EC" id="1.10.3.9"/>
    </reaction>
</comment>
<comment type="cofactor">
    <text evidence="1">The D1/D2 heterodimer binds P680, chlorophylls that are the primary electron donor of PSII, and subsequent electron acceptors. It shares a non-heme iron and each subunit binds pheophytin, quinone, additional chlorophylls, carotenoids and lipids. D1 provides most of the ligands for the Mn4-Ca-O5 cluster of the oxygen-evolving complex (OEC). There is also a Cl(-1) ion associated with D1 and D2, which is required for oxygen evolution. The PSII complex binds additional chlorophylls, carotenoids and specific lipids.</text>
</comment>
<comment type="subunit">
    <text evidence="1">PSII is composed of 1 copy each of membrane proteins PsbA, PsbB, PsbC, PsbD, PsbE, PsbF, PsbH, PsbI, PsbJ, PsbK, PsbL, PsbM, PsbT, PsbX, PsbY, PsbZ, Psb30/Ycf12, at least 3 peripheral proteins of the oxygen-evolving complex and a large number of cofactors. It forms dimeric complexes.</text>
</comment>
<comment type="subcellular location">
    <subcellularLocation>
        <location evidence="1">Plastid</location>
        <location evidence="1">Chloroplast thylakoid membrane</location>
        <topology evidence="1">Multi-pass membrane protein</topology>
    </subcellularLocation>
</comment>
<comment type="PTM">
    <text evidence="1">Tyr-161 forms a radical intermediate that is referred to as redox-active TyrZ, YZ or Y-Z.</text>
</comment>
<comment type="PTM">
    <text evidence="1">C-terminally processed by CTPA; processing is essential to allow assembly of the oxygen-evolving complex and thus photosynthetic growth.</text>
</comment>
<comment type="miscellaneous">
    <text evidence="1">2 of the reaction center chlorophylls (ChlD1 and ChlD2) are entirely coordinated by water.</text>
</comment>
<comment type="miscellaneous">
    <text evidence="1">Herbicides such as atrazine, BNT, diuron or ioxynil bind in the Q(B) binding site and block subsequent electron transfer.</text>
</comment>
<comment type="similarity">
    <text evidence="1">Belongs to the reaction center PufL/M/PsbA/D family.</text>
</comment>
<sequence length="353" mass="38891">MTVILERRESTSLWGRFCNWITSTENRLYIGWFGVLMIPTLLTATSVFIIAFIAAPPVDIDGIREPVSGSLLYGNNIISGAIIPTSAAIGLHFYPIWEAASVDEWLYNGGPYELIVLHFLLGVACYMGREWELSFRLGMRPWIAVAYSAPVAAATAVFLIYPIGQGSFSDGMPLGISGTFNFMIVFQAEHNILMHPFHMLGVAGVFGGSLFSAMHGSLVTSSLIRETTENESANAGYRFGQEEETYNIVAAHGYFGRLIFQYASFNNSRSLHFFLAAWPVVGIWFTALGISTMAFNLNGFNFNQSVVDSQGRVINTWADIINRANLGMEVMHERNAHNFPLDLAAVEAPSING</sequence>
<evidence type="ECO:0000255" key="1">
    <source>
        <dbReference type="HAMAP-Rule" id="MF_01379"/>
    </source>
</evidence>
<reference key="1">
    <citation type="journal article" date="2007" name="Mol. Phylogenet. Evol.">
        <title>Phylogenetic and evolutionary implications of complete chloroplast genome sequences of four early-diverging angiosperms: Buxus (Buxaceae), Chloranthus (Chloranthaceae), Dioscorea (Dioscoreaceae), and Illicium (Schisandraceae).</title>
        <authorList>
            <person name="Hansen D.R."/>
            <person name="Dastidar S.G."/>
            <person name="Cai Z."/>
            <person name="Penaflor C."/>
            <person name="Kuehl J.V."/>
            <person name="Boore J.L."/>
            <person name="Jansen R.K."/>
        </authorList>
    </citation>
    <scope>NUCLEOTIDE SEQUENCE [LARGE SCALE GENOMIC DNA]</scope>
</reference>
<feature type="initiator methionine" description="Removed" evidence="1">
    <location>
        <position position="1"/>
    </location>
</feature>
<feature type="chain" id="PRO_0000340001" description="Photosystem II protein D1" evidence="1">
    <location>
        <begin position="2"/>
        <end position="344"/>
    </location>
</feature>
<feature type="propeptide" id="PRO_0000340002" evidence="1">
    <location>
        <begin position="345"/>
        <end position="353"/>
    </location>
</feature>
<feature type="transmembrane region" description="Helical" evidence="1">
    <location>
        <begin position="29"/>
        <end position="46"/>
    </location>
</feature>
<feature type="transmembrane region" description="Helical" evidence="1">
    <location>
        <begin position="118"/>
        <end position="133"/>
    </location>
</feature>
<feature type="transmembrane region" description="Helical" evidence="1">
    <location>
        <begin position="142"/>
        <end position="156"/>
    </location>
</feature>
<feature type="transmembrane region" description="Helical" evidence="1">
    <location>
        <begin position="197"/>
        <end position="218"/>
    </location>
</feature>
<feature type="transmembrane region" description="Helical" evidence="1">
    <location>
        <begin position="274"/>
        <end position="288"/>
    </location>
</feature>
<feature type="binding site" description="axial binding residue" evidence="1">
    <location>
        <position position="118"/>
    </location>
    <ligand>
        <name>chlorophyll a</name>
        <dbReference type="ChEBI" id="CHEBI:58416"/>
        <label>ChlzD1</label>
    </ligand>
    <ligandPart>
        <name>Mg</name>
        <dbReference type="ChEBI" id="CHEBI:25107"/>
    </ligandPart>
</feature>
<feature type="binding site" evidence="1">
    <location>
        <position position="126"/>
    </location>
    <ligand>
        <name>pheophytin a</name>
        <dbReference type="ChEBI" id="CHEBI:136840"/>
        <label>D1</label>
    </ligand>
</feature>
<feature type="binding site" evidence="1">
    <location>
        <position position="170"/>
    </location>
    <ligand>
        <name>[CaMn4O5] cluster</name>
        <dbReference type="ChEBI" id="CHEBI:189552"/>
    </ligand>
</feature>
<feature type="binding site" evidence="1">
    <location>
        <position position="189"/>
    </location>
    <ligand>
        <name>[CaMn4O5] cluster</name>
        <dbReference type="ChEBI" id="CHEBI:189552"/>
    </ligand>
</feature>
<feature type="binding site" description="axial binding residue" evidence="1">
    <location>
        <position position="198"/>
    </location>
    <ligand>
        <name>chlorophyll a</name>
        <dbReference type="ChEBI" id="CHEBI:58416"/>
        <label>PD1</label>
    </ligand>
    <ligandPart>
        <name>Mg</name>
        <dbReference type="ChEBI" id="CHEBI:25107"/>
    </ligandPart>
</feature>
<feature type="binding site" evidence="1">
    <location>
        <position position="215"/>
    </location>
    <ligand>
        <name>a quinone</name>
        <dbReference type="ChEBI" id="CHEBI:132124"/>
        <label>B</label>
    </ligand>
</feature>
<feature type="binding site" evidence="1">
    <location>
        <position position="215"/>
    </location>
    <ligand>
        <name>Fe cation</name>
        <dbReference type="ChEBI" id="CHEBI:24875"/>
        <note>ligand shared with heterodimeric partner</note>
    </ligand>
</feature>
<feature type="binding site" evidence="1">
    <location>
        <begin position="264"/>
        <end position="265"/>
    </location>
    <ligand>
        <name>a quinone</name>
        <dbReference type="ChEBI" id="CHEBI:132124"/>
        <label>B</label>
    </ligand>
</feature>
<feature type="binding site" evidence="1">
    <location>
        <position position="272"/>
    </location>
    <ligand>
        <name>Fe cation</name>
        <dbReference type="ChEBI" id="CHEBI:24875"/>
        <note>ligand shared with heterodimeric partner</note>
    </ligand>
</feature>
<feature type="binding site" evidence="1">
    <location>
        <position position="332"/>
    </location>
    <ligand>
        <name>[CaMn4O5] cluster</name>
        <dbReference type="ChEBI" id="CHEBI:189552"/>
    </ligand>
</feature>
<feature type="binding site" evidence="1">
    <location>
        <position position="333"/>
    </location>
    <ligand>
        <name>[CaMn4O5] cluster</name>
        <dbReference type="ChEBI" id="CHEBI:189552"/>
    </ligand>
</feature>
<feature type="binding site" evidence="1">
    <location>
        <position position="342"/>
    </location>
    <ligand>
        <name>[CaMn4O5] cluster</name>
        <dbReference type="ChEBI" id="CHEBI:189552"/>
    </ligand>
</feature>
<feature type="binding site" evidence="1">
    <location>
        <position position="344"/>
    </location>
    <ligand>
        <name>[CaMn4O5] cluster</name>
        <dbReference type="ChEBI" id="CHEBI:189552"/>
    </ligand>
</feature>
<feature type="site" description="Tyrosine radical intermediate" evidence="1">
    <location>
        <position position="161"/>
    </location>
</feature>
<feature type="site" description="Stabilizes free radical intermediate" evidence="1">
    <location>
        <position position="190"/>
    </location>
</feature>
<feature type="site" description="Cleavage; by CTPA" evidence="1">
    <location>
        <begin position="344"/>
        <end position="345"/>
    </location>
</feature>
<feature type="modified residue" description="N-acetylthreonine" evidence="1">
    <location>
        <position position="2"/>
    </location>
</feature>
<feature type="modified residue" description="Phosphothreonine" evidence="1">
    <location>
        <position position="2"/>
    </location>
</feature>
<accession>A6MMS4</accession>
<gene>
    <name evidence="1" type="primary">psbA</name>
</gene>